<reference key="1">
    <citation type="journal article" date="2009" name="Appl. Environ. Microbiol.">
        <title>Three genomes from the phylum Acidobacteria provide insight into the lifestyles of these microorganisms in soils.</title>
        <authorList>
            <person name="Ward N.L."/>
            <person name="Challacombe J.F."/>
            <person name="Janssen P.H."/>
            <person name="Henrissat B."/>
            <person name="Coutinho P.M."/>
            <person name="Wu M."/>
            <person name="Xie G."/>
            <person name="Haft D.H."/>
            <person name="Sait M."/>
            <person name="Badger J."/>
            <person name="Barabote R.D."/>
            <person name="Bradley B."/>
            <person name="Brettin T.S."/>
            <person name="Brinkac L.M."/>
            <person name="Bruce D."/>
            <person name="Creasy T."/>
            <person name="Daugherty S.C."/>
            <person name="Davidsen T.M."/>
            <person name="DeBoy R.T."/>
            <person name="Detter J.C."/>
            <person name="Dodson R.J."/>
            <person name="Durkin A.S."/>
            <person name="Ganapathy A."/>
            <person name="Gwinn-Giglio M."/>
            <person name="Han C.S."/>
            <person name="Khouri H."/>
            <person name="Kiss H."/>
            <person name="Kothari S.P."/>
            <person name="Madupu R."/>
            <person name="Nelson K.E."/>
            <person name="Nelson W.C."/>
            <person name="Paulsen I."/>
            <person name="Penn K."/>
            <person name="Ren Q."/>
            <person name="Rosovitz M.J."/>
            <person name="Selengut J.D."/>
            <person name="Shrivastava S."/>
            <person name="Sullivan S.A."/>
            <person name="Tapia R."/>
            <person name="Thompson L.S."/>
            <person name="Watkins K.L."/>
            <person name="Yang Q."/>
            <person name="Yu C."/>
            <person name="Zafar N."/>
            <person name="Zhou L."/>
            <person name="Kuske C.R."/>
        </authorList>
    </citation>
    <scope>NUCLEOTIDE SEQUENCE [LARGE SCALE GENOMIC DNA]</scope>
    <source>
        <strain>Ellin345</strain>
    </source>
</reference>
<protein>
    <recommendedName>
        <fullName evidence="1">NADH-quinone oxidoreductase subunit K 2</fullName>
        <ecNumber evidence="1">7.1.1.-</ecNumber>
    </recommendedName>
    <alternativeName>
        <fullName evidence="1">NADH dehydrogenase I subunit K 2</fullName>
    </alternativeName>
    <alternativeName>
        <fullName evidence="1">NDH-1 subunit K 2</fullName>
    </alternativeName>
</protein>
<dbReference type="EC" id="7.1.1.-" evidence="1"/>
<dbReference type="EMBL" id="CP000360">
    <property type="protein sequence ID" value="ABF40308.1"/>
    <property type="molecule type" value="Genomic_DNA"/>
</dbReference>
<dbReference type="RefSeq" id="WP_011522110.1">
    <property type="nucleotide sequence ID" value="NC_008009.1"/>
</dbReference>
<dbReference type="SMR" id="Q1IS42"/>
<dbReference type="STRING" id="204669.Acid345_1306"/>
<dbReference type="EnsemblBacteria" id="ABF40308">
    <property type="protein sequence ID" value="ABF40308"/>
    <property type="gene ID" value="Acid345_1306"/>
</dbReference>
<dbReference type="KEGG" id="aba:Acid345_1306"/>
<dbReference type="eggNOG" id="COG0713">
    <property type="taxonomic scope" value="Bacteria"/>
</dbReference>
<dbReference type="HOGENOM" id="CLU_144724_0_0_0"/>
<dbReference type="OrthoDB" id="9810120at2"/>
<dbReference type="Proteomes" id="UP000002432">
    <property type="component" value="Chromosome"/>
</dbReference>
<dbReference type="GO" id="GO:0030964">
    <property type="term" value="C:NADH dehydrogenase complex"/>
    <property type="evidence" value="ECO:0007669"/>
    <property type="project" value="TreeGrafter"/>
</dbReference>
<dbReference type="GO" id="GO:0005886">
    <property type="term" value="C:plasma membrane"/>
    <property type="evidence" value="ECO:0007669"/>
    <property type="project" value="UniProtKB-SubCell"/>
</dbReference>
<dbReference type="GO" id="GO:0050136">
    <property type="term" value="F:NADH:ubiquinone reductase (non-electrogenic) activity"/>
    <property type="evidence" value="ECO:0007669"/>
    <property type="project" value="UniProtKB-UniRule"/>
</dbReference>
<dbReference type="GO" id="GO:0048038">
    <property type="term" value="F:quinone binding"/>
    <property type="evidence" value="ECO:0007669"/>
    <property type="project" value="UniProtKB-KW"/>
</dbReference>
<dbReference type="GO" id="GO:0042773">
    <property type="term" value="P:ATP synthesis coupled electron transport"/>
    <property type="evidence" value="ECO:0007669"/>
    <property type="project" value="InterPro"/>
</dbReference>
<dbReference type="FunFam" id="1.10.287.3510:FF:000001">
    <property type="entry name" value="NADH-quinone oxidoreductase subunit K"/>
    <property type="match status" value="1"/>
</dbReference>
<dbReference type="Gene3D" id="1.10.287.3510">
    <property type="match status" value="1"/>
</dbReference>
<dbReference type="HAMAP" id="MF_01456">
    <property type="entry name" value="NDH1_NuoK"/>
    <property type="match status" value="1"/>
</dbReference>
<dbReference type="InterPro" id="IPR001133">
    <property type="entry name" value="NADH_UbQ_OxRdtase_chain4L/K"/>
</dbReference>
<dbReference type="InterPro" id="IPR039428">
    <property type="entry name" value="NUOK/Mnh_C1-like"/>
</dbReference>
<dbReference type="NCBIfam" id="NF004320">
    <property type="entry name" value="PRK05715.1-2"/>
    <property type="match status" value="1"/>
</dbReference>
<dbReference type="NCBIfam" id="NF004321">
    <property type="entry name" value="PRK05715.1-3"/>
    <property type="match status" value="1"/>
</dbReference>
<dbReference type="NCBIfam" id="NF004323">
    <property type="entry name" value="PRK05715.1-5"/>
    <property type="match status" value="1"/>
</dbReference>
<dbReference type="PANTHER" id="PTHR11434:SF21">
    <property type="entry name" value="NADH DEHYDROGENASE SUBUNIT 4L-RELATED"/>
    <property type="match status" value="1"/>
</dbReference>
<dbReference type="PANTHER" id="PTHR11434">
    <property type="entry name" value="NADH-UBIQUINONE OXIDOREDUCTASE SUBUNIT ND4L"/>
    <property type="match status" value="1"/>
</dbReference>
<dbReference type="Pfam" id="PF00420">
    <property type="entry name" value="Oxidored_q2"/>
    <property type="match status" value="1"/>
</dbReference>
<evidence type="ECO:0000255" key="1">
    <source>
        <dbReference type="HAMAP-Rule" id="MF_01456"/>
    </source>
</evidence>
<accession>Q1IS42</accession>
<keyword id="KW-0997">Cell inner membrane</keyword>
<keyword id="KW-1003">Cell membrane</keyword>
<keyword id="KW-0472">Membrane</keyword>
<keyword id="KW-0520">NAD</keyword>
<keyword id="KW-0874">Quinone</keyword>
<keyword id="KW-1185">Reference proteome</keyword>
<keyword id="KW-1278">Translocase</keyword>
<keyword id="KW-0812">Transmembrane</keyword>
<keyword id="KW-1133">Transmembrane helix</keyword>
<keyword id="KW-0813">Transport</keyword>
<keyword id="KW-0830">Ubiquinone</keyword>
<sequence length="103" mass="11466">MSSTIPLAWYLMLSAFLFICGVIGFMIKRNIITIFMCIELMLNAVNLTFVAYATELRSLSGHIFVFFVMVVAAAESAVGLGIIIAVFRSRETLNVDRVNLLKL</sequence>
<comment type="function">
    <text evidence="1">NDH-1 shuttles electrons from NADH, via FMN and iron-sulfur (Fe-S) centers, to quinones in the respiratory chain. The immediate electron acceptor for the enzyme in this species is believed to be ubiquinone. Couples the redox reaction to proton translocation (for every two electrons transferred, four hydrogen ions are translocated across the cytoplasmic membrane), and thus conserves the redox energy in a proton gradient.</text>
</comment>
<comment type="catalytic activity">
    <reaction evidence="1">
        <text>a quinone + NADH + 5 H(+)(in) = a quinol + NAD(+) + 4 H(+)(out)</text>
        <dbReference type="Rhea" id="RHEA:57888"/>
        <dbReference type="ChEBI" id="CHEBI:15378"/>
        <dbReference type="ChEBI" id="CHEBI:24646"/>
        <dbReference type="ChEBI" id="CHEBI:57540"/>
        <dbReference type="ChEBI" id="CHEBI:57945"/>
        <dbReference type="ChEBI" id="CHEBI:132124"/>
    </reaction>
</comment>
<comment type="subunit">
    <text evidence="1">NDH-1 is composed of 14 different subunits. Subunits NuoA, H, J, K, L, M, N constitute the membrane sector of the complex.</text>
</comment>
<comment type="subcellular location">
    <subcellularLocation>
        <location evidence="1">Cell inner membrane</location>
        <topology evidence="1">Multi-pass membrane protein</topology>
    </subcellularLocation>
</comment>
<comment type="similarity">
    <text evidence="1">Belongs to the complex I subunit 4L family.</text>
</comment>
<organism>
    <name type="scientific">Koribacter versatilis (strain Ellin345)</name>
    <dbReference type="NCBI Taxonomy" id="204669"/>
    <lineage>
        <taxon>Bacteria</taxon>
        <taxon>Pseudomonadati</taxon>
        <taxon>Acidobacteriota</taxon>
        <taxon>Terriglobia</taxon>
        <taxon>Terriglobales</taxon>
        <taxon>Candidatus Korobacteraceae</taxon>
        <taxon>Candidatus Korobacter</taxon>
    </lineage>
</organism>
<proteinExistence type="inferred from homology"/>
<feature type="chain" id="PRO_0000389908" description="NADH-quinone oxidoreductase subunit K 2">
    <location>
        <begin position="1"/>
        <end position="103"/>
    </location>
</feature>
<feature type="transmembrane region" description="Helical" evidence="1">
    <location>
        <begin position="7"/>
        <end position="27"/>
    </location>
</feature>
<feature type="transmembrane region" description="Helical" evidence="1">
    <location>
        <begin position="31"/>
        <end position="51"/>
    </location>
</feature>
<feature type="transmembrane region" description="Helical" evidence="1">
    <location>
        <begin position="63"/>
        <end position="83"/>
    </location>
</feature>
<gene>
    <name evidence="1" type="primary">nuoK2</name>
    <name type="ordered locus">Acid345_1306</name>
</gene>
<name>NUOK2_KORVE</name>